<reference key="1">
    <citation type="journal article" date="2008" name="DNA Res.">
        <title>Complete genome sequence and comparative analysis of the wild-type commensal Escherichia coli strain SE11 isolated from a healthy adult.</title>
        <authorList>
            <person name="Oshima K."/>
            <person name="Toh H."/>
            <person name="Ogura Y."/>
            <person name="Sasamoto H."/>
            <person name="Morita H."/>
            <person name="Park S.-H."/>
            <person name="Ooka T."/>
            <person name="Iyoda S."/>
            <person name="Taylor T.D."/>
            <person name="Hayashi T."/>
            <person name="Itoh K."/>
            <person name="Hattori M."/>
        </authorList>
    </citation>
    <scope>NUCLEOTIDE SEQUENCE [LARGE SCALE GENOMIC DNA]</scope>
    <source>
        <strain>SE11</strain>
    </source>
</reference>
<name>YACG_ECOSE</name>
<gene>
    <name evidence="1" type="primary">yacG</name>
    <name type="ordered locus">ECSE_0102</name>
</gene>
<sequence length="65" mass="7306">MSETITVNCPTCGKTVVWGEISPFRPFCSKRCQLIDLGEWAAEEKRIPSSGDLSESDDWSEEPKQ</sequence>
<dbReference type="EMBL" id="AP009240">
    <property type="protein sequence ID" value="BAG75626.1"/>
    <property type="molecule type" value="Genomic_DNA"/>
</dbReference>
<dbReference type="RefSeq" id="WP_000005042.1">
    <property type="nucleotide sequence ID" value="NC_011415.1"/>
</dbReference>
<dbReference type="SMR" id="B6HZ78"/>
<dbReference type="GeneID" id="93777334"/>
<dbReference type="KEGG" id="ecy:ECSE_0102"/>
<dbReference type="HOGENOM" id="CLU_178280_3_1_6"/>
<dbReference type="Proteomes" id="UP000008199">
    <property type="component" value="Chromosome"/>
</dbReference>
<dbReference type="GO" id="GO:0008657">
    <property type="term" value="F:DNA topoisomerase type II (double strand cut, ATP-hydrolyzing) inhibitor activity"/>
    <property type="evidence" value="ECO:0007669"/>
    <property type="project" value="UniProtKB-UniRule"/>
</dbReference>
<dbReference type="GO" id="GO:0008270">
    <property type="term" value="F:zinc ion binding"/>
    <property type="evidence" value="ECO:0007669"/>
    <property type="project" value="UniProtKB-UniRule"/>
</dbReference>
<dbReference type="GO" id="GO:0006355">
    <property type="term" value="P:regulation of DNA-templated transcription"/>
    <property type="evidence" value="ECO:0007669"/>
    <property type="project" value="InterPro"/>
</dbReference>
<dbReference type="FunFam" id="3.30.50.10:FF:000026">
    <property type="entry name" value="DNA gyrase inhibitor YacG"/>
    <property type="match status" value="1"/>
</dbReference>
<dbReference type="Gene3D" id="3.30.50.10">
    <property type="entry name" value="Erythroid Transcription Factor GATA-1, subunit A"/>
    <property type="match status" value="1"/>
</dbReference>
<dbReference type="HAMAP" id="MF_00649">
    <property type="entry name" value="DNA_gyrase_inhibitor_YacG"/>
    <property type="match status" value="1"/>
</dbReference>
<dbReference type="InterPro" id="IPR005584">
    <property type="entry name" value="DNA_gyrase_inhibitor_YacG"/>
</dbReference>
<dbReference type="InterPro" id="IPR013088">
    <property type="entry name" value="Znf_NHR/GATA"/>
</dbReference>
<dbReference type="NCBIfam" id="NF001638">
    <property type="entry name" value="PRK00418.1"/>
    <property type="match status" value="1"/>
</dbReference>
<dbReference type="PANTHER" id="PTHR36150">
    <property type="entry name" value="DNA GYRASE INHIBITOR YACG"/>
    <property type="match status" value="1"/>
</dbReference>
<dbReference type="PANTHER" id="PTHR36150:SF1">
    <property type="entry name" value="DNA GYRASE INHIBITOR YACG"/>
    <property type="match status" value="1"/>
</dbReference>
<dbReference type="Pfam" id="PF03884">
    <property type="entry name" value="YacG"/>
    <property type="match status" value="1"/>
</dbReference>
<dbReference type="SUPFAM" id="SSF57716">
    <property type="entry name" value="Glucocorticoid receptor-like (DNA-binding domain)"/>
    <property type="match status" value="1"/>
</dbReference>
<keyword id="KW-0479">Metal-binding</keyword>
<keyword id="KW-0862">Zinc</keyword>
<organism>
    <name type="scientific">Escherichia coli (strain SE11)</name>
    <dbReference type="NCBI Taxonomy" id="409438"/>
    <lineage>
        <taxon>Bacteria</taxon>
        <taxon>Pseudomonadati</taxon>
        <taxon>Pseudomonadota</taxon>
        <taxon>Gammaproteobacteria</taxon>
        <taxon>Enterobacterales</taxon>
        <taxon>Enterobacteriaceae</taxon>
        <taxon>Escherichia</taxon>
    </lineage>
</organism>
<proteinExistence type="inferred from homology"/>
<feature type="chain" id="PRO_1000130961" description="DNA gyrase inhibitor YacG">
    <location>
        <begin position="1"/>
        <end position="65"/>
    </location>
</feature>
<feature type="region of interest" description="Disordered" evidence="2">
    <location>
        <begin position="45"/>
        <end position="65"/>
    </location>
</feature>
<feature type="compositionally biased region" description="Acidic residues" evidence="2">
    <location>
        <begin position="54"/>
        <end position="65"/>
    </location>
</feature>
<feature type="binding site" evidence="1">
    <location>
        <position position="9"/>
    </location>
    <ligand>
        <name>Zn(2+)</name>
        <dbReference type="ChEBI" id="CHEBI:29105"/>
    </ligand>
</feature>
<feature type="binding site" evidence="1">
    <location>
        <position position="12"/>
    </location>
    <ligand>
        <name>Zn(2+)</name>
        <dbReference type="ChEBI" id="CHEBI:29105"/>
    </ligand>
</feature>
<feature type="binding site" evidence="1">
    <location>
        <position position="28"/>
    </location>
    <ligand>
        <name>Zn(2+)</name>
        <dbReference type="ChEBI" id="CHEBI:29105"/>
    </ligand>
</feature>
<feature type="binding site" evidence="1">
    <location>
        <position position="32"/>
    </location>
    <ligand>
        <name>Zn(2+)</name>
        <dbReference type="ChEBI" id="CHEBI:29105"/>
    </ligand>
</feature>
<evidence type="ECO:0000255" key="1">
    <source>
        <dbReference type="HAMAP-Rule" id="MF_00649"/>
    </source>
</evidence>
<evidence type="ECO:0000256" key="2">
    <source>
        <dbReference type="SAM" id="MobiDB-lite"/>
    </source>
</evidence>
<accession>B6HZ78</accession>
<comment type="function">
    <text evidence="1">Inhibits all the catalytic activities of DNA gyrase by preventing its interaction with DNA. Acts by binding directly to the C-terminal domain of GyrB, which probably disrupts DNA binding by the gyrase.</text>
</comment>
<comment type="cofactor">
    <cofactor evidence="1">
        <name>Zn(2+)</name>
        <dbReference type="ChEBI" id="CHEBI:29105"/>
    </cofactor>
    <text evidence="1">Binds 1 zinc ion.</text>
</comment>
<comment type="subunit">
    <text evidence="1">Interacts with GyrB.</text>
</comment>
<comment type="similarity">
    <text evidence="1">Belongs to the DNA gyrase inhibitor YacG family.</text>
</comment>
<protein>
    <recommendedName>
        <fullName evidence="1">DNA gyrase inhibitor YacG</fullName>
    </recommendedName>
</protein>